<gene>
    <name evidence="1" type="primary">cysS</name>
    <name type="ordered locus">Cthe_2065</name>
</gene>
<proteinExistence type="inferred from homology"/>
<accession>A3DH43</accession>
<comment type="catalytic activity">
    <reaction evidence="1">
        <text>tRNA(Cys) + L-cysteine + ATP = L-cysteinyl-tRNA(Cys) + AMP + diphosphate</text>
        <dbReference type="Rhea" id="RHEA:17773"/>
        <dbReference type="Rhea" id="RHEA-COMP:9661"/>
        <dbReference type="Rhea" id="RHEA-COMP:9679"/>
        <dbReference type="ChEBI" id="CHEBI:30616"/>
        <dbReference type="ChEBI" id="CHEBI:33019"/>
        <dbReference type="ChEBI" id="CHEBI:35235"/>
        <dbReference type="ChEBI" id="CHEBI:78442"/>
        <dbReference type="ChEBI" id="CHEBI:78517"/>
        <dbReference type="ChEBI" id="CHEBI:456215"/>
        <dbReference type="EC" id="6.1.1.16"/>
    </reaction>
</comment>
<comment type="cofactor">
    <cofactor evidence="1">
        <name>Zn(2+)</name>
        <dbReference type="ChEBI" id="CHEBI:29105"/>
    </cofactor>
    <text evidence="1">Binds 1 zinc ion per subunit.</text>
</comment>
<comment type="subunit">
    <text evidence="1">Monomer.</text>
</comment>
<comment type="subcellular location">
    <subcellularLocation>
        <location evidence="1">Cytoplasm</location>
    </subcellularLocation>
</comment>
<comment type="similarity">
    <text evidence="1">Belongs to the class-I aminoacyl-tRNA synthetase family.</text>
</comment>
<evidence type="ECO:0000255" key="1">
    <source>
        <dbReference type="HAMAP-Rule" id="MF_00041"/>
    </source>
</evidence>
<reference key="1">
    <citation type="submission" date="2007-02" db="EMBL/GenBank/DDBJ databases">
        <title>Complete sequence of Clostridium thermocellum ATCC 27405.</title>
        <authorList>
            <consortium name="US DOE Joint Genome Institute"/>
            <person name="Copeland A."/>
            <person name="Lucas S."/>
            <person name="Lapidus A."/>
            <person name="Barry K."/>
            <person name="Detter J.C."/>
            <person name="Glavina del Rio T."/>
            <person name="Hammon N."/>
            <person name="Israni S."/>
            <person name="Dalin E."/>
            <person name="Tice H."/>
            <person name="Pitluck S."/>
            <person name="Chertkov O."/>
            <person name="Brettin T."/>
            <person name="Bruce D."/>
            <person name="Han C."/>
            <person name="Tapia R."/>
            <person name="Gilna P."/>
            <person name="Schmutz J."/>
            <person name="Larimer F."/>
            <person name="Land M."/>
            <person name="Hauser L."/>
            <person name="Kyrpides N."/>
            <person name="Mikhailova N."/>
            <person name="Wu J.H.D."/>
            <person name="Newcomb M."/>
            <person name="Richardson P."/>
        </authorList>
    </citation>
    <scope>NUCLEOTIDE SEQUENCE [LARGE SCALE GENOMIC DNA]</scope>
    <source>
        <strain>ATCC 27405 / DSM 1237 / JCM 9322 / NBRC 103400 / NCIMB 10682 / NRRL B-4536 / VPI 7372</strain>
    </source>
</reference>
<protein>
    <recommendedName>
        <fullName evidence="1">Cysteine--tRNA ligase</fullName>
        <ecNumber evidence="1">6.1.1.16</ecNumber>
    </recommendedName>
    <alternativeName>
        <fullName evidence="1">Cysteinyl-tRNA synthetase</fullName>
        <shortName evidence="1">CysRS</shortName>
    </alternativeName>
</protein>
<feature type="chain" id="PRO_0000332809" description="Cysteine--tRNA ligase">
    <location>
        <begin position="1"/>
        <end position="468"/>
    </location>
</feature>
<feature type="short sequence motif" description="'HIGH' region">
    <location>
        <begin position="29"/>
        <end position="39"/>
    </location>
</feature>
<feature type="short sequence motif" description="'KMSKS' region">
    <location>
        <begin position="264"/>
        <end position="268"/>
    </location>
</feature>
<feature type="binding site" evidence="1">
    <location>
        <position position="27"/>
    </location>
    <ligand>
        <name>Zn(2+)</name>
        <dbReference type="ChEBI" id="CHEBI:29105"/>
    </ligand>
</feature>
<feature type="binding site" evidence="1">
    <location>
        <position position="207"/>
    </location>
    <ligand>
        <name>Zn(2+)</name>
        <dbReference type="ChEBI" id="CHEBI:29105"/>
    </ligand>
</feature>
<feature type="binding site" evidence="1">
    <location>
        <position position="232"/>
    </location>
    <ligand>
        <name>Zn(2+)</name>
        <dbReference type="ChEBI" id="CHEBI:29105"/>
    </ligand>
</feature>
<feature type="binding site" evidence="1">
    <location>
        <position position="236"/>
    </location>
    <ligand>
        <name>Zn(2+)</name>
        <dbReference type="ChEBI" id="CHEBI:29105"/>
    </ligand>
</feature>
<feature type="binding site" evidence="1">
    <location>
        <position position="267"/>
    </location>
    <ligand>
        <name>ATP</name>
        <dbReference type="ChEBI" id="CHEBI:30616"/>
    </ligand>
</feature>
<organism>
    <name type="scientific">Acetivibrio thermocellus (strain ATCC 27405 / DSM 1237 / JCM 9322 / NBRC 103400 / NCIMB 10682 / NRRL B-4536 / VPI 7372)</name>
    <name type="common">Clostridium thermocellum</name>
    <dbReference type="NCBI Taxonomy" id="203119"/>
    <lineage>
        <taxon>Bacteria</taxon>
        <taxon>Bacillati</taxon>
        <taxon>Bacillota</taxon>
        <taxon>Clostridia</taxon>
        <taxon>Eubacteriales</taxon>
        <taxon>Oscillospiraceae</taxon>
        <taxon>Acetivibrio</taxon>
    </lineage>
</organism>
<sequence>MRLYNTLTRKKEEFHPIDEKEVKMYSCGPTVYNYFHIGNARPFIIFDTLRRYLEYKGYNVKFVQNFTDIDDKMIKRANEEGITVKELADKFINEYFVDAKGLGIKEATVHPRATENIDAIIEMIKKLEEKGFAYNVDGDVYFSARKFTEYGKLSHQSLEDLELGARIDVDERKKDPMDFALWKAQKPGEPAWDSPWGKGRPGWHIECSAMANKYLGETIDIHSGGQDLVFPHHENEIAQSEAANGKPFARFWLHNGFINVDGEKMAKSKGNFFTVRDIAKTFDYEVIRFFMLSAHYRSPINFSAELLEQAKNGLERIYNCLDNLEYLKEHAQAEKITDSERELQNRLLGIKAKFIEAMDDDINTADAIAAIFDIVKEVNTNINATSNSSKEIIDFSLSLIKELGGVLGIAQKSRQKVLDKEIEELIERRQKARKEKDWKTADEIRDKLKEMGIILEDTPQGVKWTIQR</sequence>
<keyword id="KW-0030">Aminoacyl-tRNA synthetase</keyword>
<keyword id="KW-0067">ATP-binding</keyword>
<keyword id="KW-0963">Cytoplasm</keyword>
<keyword id="KW-0436">Ligase</keyword>
<keyword id="KW-0479">Metal-binding</keyword>
<keyword id="KW-0547">Nucleotide-binding</keyword>
<keyword id="KW-0648">Protein biosynthesis</keyword>
<keyword id="KW-1185">Reference proteome</keyword>
<keyword id="KW-0862">Zinc</keyword>
<name>SYC_ACET2</name>
<dbReference type="EC" id="6.1.1.16" evidence="1"/>
<dbReference type="EMBL" id="CP000568">
    <property type="protein sequence ID" value="ABN53272.1"/>
    <property type="molecule type" value="Genomic_DNA"/>
</dbReference>
<dbReference type="RefSeq" id="WP_003514134.1">
    <property type="nucleotide sequence ID" value="NC_009012.1"/>
</dbReference>
<dbReference type="SMR" id="A3DH43"/>
<dbReference type="STRING" id="203119.Cthe_2065"/>
<dbReference type="GeneID" id="35803647"/>
<dbReference type="KEGG" id="cth:Cthe_2065"/>
<dbReference type="eggNOG" id="COG0215">
    <property type="taxonomic scope" value="Bacteria"/>
</dbReference>
<dbReference type="HOGENOM" id="CLU_013528_0_1_9"/>
<dbReference type="OrthoDB" id="9815130at2"/>
<dbReference type="Proteomes" id="UP000002145">
    <property type="component" value="Chromosome"/>
</dbReference>
<dbReference type="GO" id="GO:0005829">
    <property type="term" value="C:cytosol"/>
    <property type="evidence" value="ECO:0007669"/>
    <property type="project" value="TreeGrafter"/>
</dbReference>
<dbReference type="GO" id="GO:0005524">
    <property type="term" value="F:ATP binding"/>
    <property type="evidence" value="ECO:0007669"/>
    <property type="project" value="UniProtKB-UniRule"/>
</dbReference>
<dbReference type="GO" id="GO:0004817">
    <property type="term" value="F:cysteine-tRNA ligase activity"/>
    <property type="evidence" value="ECO:0007669"/>
    <property type="project" value="UniProtKB-UniRule"/>
</dbReference>
<dbReference type="GO" id="GO:0008270">
    <property type="term" value="F:zinc ion binding"/>
    <property type="evidence" value="ECO:0007669"/>
    <property type="project" value="UniProtKB-UniRule"/>
</dbReference>
<dbReference type="GO" id="GO:0006423">
    <property type="term" value="P:cysteinyl-tRNA aminoacylation"/>
    <property type="evidence" value="ECO:0007669"/>
    <property type="project" value="UniProtKB-UniRule"/>
</dbReference>
<dbReference type="CDD" id="cd00672">
    <property type="entry name" value="CysRS_core"/>
    <property type="match status" value="1"/>
</dbReference>
<dbReference type="FunFam" id="3.40.50.620:FF:000009">
    <property type="entry name" value="Cysteine--tRNA ligase"/>
    <property type="match status" value="1"/>
</dbReference>
<dbReference type="Gene3D" id="1.20.120.1910">
    <property type="entry name" value="Cysteine-tRNA ligase, C-terminal anti-codon recognition domain"/>
    <property type="match status" value="1"/>
</dbReference>
<dbReference type="Gene3D" id="3.40.50.620">
    <property type="entry name" value="HUPs"/>
    <property type="match status" value="1"/>
</dbReference>
<dbReference type="HAMAP" id="MF_00041">
    <property type="entry name" value="Cys_tRNA_synth"/>
    <property type="match status" value="1"/>
</dbReference>
<dbReference type="InterPro" id="IPR015803">
    <property type="entry name" value="Cys-tRNA-ligase"/>
</dbReference>
<dbReference type="InterPro" id="IPR015273">
    <property type="entry name" value="Cys-tRNA-synt_Ia_DALR"/>
</dbReference>
<dbReference type="InterPro" id="IPR024909">
    <property type="entry name" value="Cys-tRNA/MSH_ligase"/>
</dbReference>
<dbReference type="InterPro" id="IPR056411">
    <property type="entry name" value="CysS_C"/>
</dbReference>
<dbReference type="InterPro" id="IPR014729">
    <property type="entry name" value="Rossmann-like_a/b/a_fold"/>
</dbReference>
<dbReference type="InterPro" id="IPR032678">
    <property type="entry name" value="tRNA-synt_1_cat_dom"/>
</dbReference>
<dbReference type="InterPro" id="IPR009080">
    <property type="entry name" value="tRNAsynth_Ia_anticodon-bd"/>
</dbReference>
<dbReference type="NCBIfam" id="TIGR00435">
    <property type="entry name" value="cysS"/>
    <property type="match status" value="1"/>
</dbReference>
<dbReference type="PANTHER" id="PTHR10890:SF3">
    <property type="entry name" value="CYSTEINE--TRNA LIGASE, CYTOPLASMIC"/>
    <property type="match status" value="1"/>
</dbReference>
<dbReference type="PANTHER" id="PTHR10890">
    <property type="entry name" value="CYSTEINYL-TRNA SYNTHETASE"/>
    <property type="match status" value="1"/>
</dbReference>
<dbReference type="Pfam" id="PF23493">
    <property type="entry name" value="CysS_C"/>
    <property type="match status" value="1"/>
</dbReference>
<dbReference type="Pfam" id="PF09190">
    <property type="entry name" value="DALR_2"/>
    <property type="match status" value="1"/>
</dbReference>
<dbReference type="Pfam" id="PF01406">
    <property type="entry name" value="tRNA-synt_1e"/>
    <property type="match status" value="1"/>
</dbReference>
<dbReference type="PRINTS" id="PR00983">
    <property type="entry name" value="TRNASYNTHCYS"/>
</dbReference>
<dbReference type="SMART" id="SM00840">
    <property type="entry name" value="DALR_2"/>
    <property type="match status" value="1"/>
</dbReference>
<dbReference type="SUPFAM" id="SSF47323">
    <property type="entry name" value="Anticodon-binding domain of a subclass of class I aminoacyl-tRNA synthetases"/>
    <property type="match status" value="1"/>
</dbReference>
<dbReference type="SUPFAM" id="SSF52374">
    <property type="entry name" value="Nucleotidylyl transferase"/>
    <property type="match status" value="1"/>
</dbReference>